<keyword id="KW-0028">Amino-acid biosynthesis</keyword>
<keyword id="KW-0055">Arginine biosynthesis</keyword>
<keyword id="KW-0963">Cytoplasm</keyword>
<keyword id="KW-0521">NADP</keyword>
<keyword id="KW-0560">Oxidoreductase</keyword>
<dbReference type="EC" id="1.2.1.38" evidence="1"/>
<dbReference type="EMBL" id="CP001341">
    <property type="protein sequence ID" value="ACL39485.1"/>
    <property type="molecule type" value="Genomic_DNA"/>
</dbReference>
<dbReference type="RefSeq" id="WP_015936706.1">
    <property type="nucleotide sequence ID" value="NC_011886.1"/>
</dbReference>
<dbReference type="SMR" id="B8HGC3"/>
<dbReference type="STRING" id="452863.Achl_1497"/>
<dbReference type="KEGG" id="ach:Achl_1497"/>
<dbReference type="eggNOG" id="COG0002">
    <property type="taxonomic scope" value="Bacteria"/>
</dbReference>
<dbReference type="HOGENOM" id="CLU_006384_0_0_11"/>
<dbReference type="OrthoDB" id="9801289at2"/>
<dbReference type="UniPathway" id="UPA00068">
    <property type="reaction ID" value="UER00108"/>
</dbReference>
<dbReference type="Proteomes" id="UP000002505">
    <property type="component" value="Chromosome"/>
</dbReference>
<dbReference type="GO" id="GO:0005737">
    <property type="term" value="C:cytoplasm"/>
    <property type="evidence" value="ECO:0007669"/>
    <property type="project" value="UniProtKB-SubCell"/>
</dbReference>
<dbReference type="GO" id="GO:0003942">
    <property type="term" value="F:N-acetyl-gamma-glutamyl-phosphate reductase activity"/>
    <property type="evidence" value="ECO:0007669"/>
    <property type="project" value="UniProtKB-UniRule"/>
</dbReference>
<dbReference type="GO" id="GO:0051287">
    <property type="term" value="F:NAD binding"/>
    <property type="evidence" value="ECO:0007669"/>
    <property type="project" value="InterPro"/>
</dbReference>
<dbReference type="GO" id="GO:0070401">
    <property type="term" value="F:NADP+ binding"/>
    <property type="evidence" value="ECO:0007669"/>
    <property type="project" value="InterPro"/>
</dbReference>
<dbReference type="GO" id="GO:0006526">
    <property type="term" value="P:L-arginine biosynthetic process"/>
    <property type="evidence" value="ECO:0007669"/>
    <property type="project" value="UniProtKB-UniRule"/>
</dbReference>
<dbReference type="CDD" id="cd24148">
    <property type="entry name" value="AGPR_1_actinobacAGPR_like"/>
    <property type="match status" value="1"/>
</dbReference>
<dbReference type="CDD" id="cd23934">
    <property type="entry name" value="AGPR_1_C"/>
    <property type="match status" value="1"/>
</dbReference>
<dbReference type="FunFam" id="3.30.360.10:FF:000014">
    <property type="entry name" value="N-acetyl-gamma-glutamyl-phosphate reductase"/>
    <property type="match status" value="1"/>
</dbReference>
<dbReference type="Gene3D" id="3.30.360.10">
    <property type="entry name" value="Dihydrodipicolinate Reductase, domain 2"/>
    <property type="match status" value="1"/>
</dbReference>
<dbReference type="Gene3D" id="3.40.50.720">
    <property type="entry name" value="NAD(P)-binding Rossmann-like Domain"/>
    <property type="match status" value="1"/>
</dbReference>
<dbReference type="HAMAP" id="MF_00150">
    <property type="entry name" value="ArgC_type1"/>
    <property type="match status" value="1"/>
</dbReference>
<dbReference type="InterPro" id="IPR023013">
    <property type="entry name" value="AGPR_AS"/>
</dbReference>
<dbReference type="InterPro" id="IPR000706">
    <property type="entry name" value="AGPR_type-1"/>
</dbReference>
<dbReference type="InterPro" id="IPR036291">
    <property type="entry name" value="NAD(P)-bd_dom_sf"/>
</dbReference>
<dbReference type="InterPro" id="IPR050085">
    <property type="entry name" value="NAGSA_dehydrogenase"/>
</dbReference>
<dbReference type="InterPro" id="IPR000534">
    <property type="entry name" value="Semialdehyde_DH_NAD-bd"/>
</dbReference>
<dbReference type="NCBIfam" id="TIGR01850">
    <property type="entry name" value="argC"/>
    <property type="match status" value="1"/>
</dbReference>
<dbReference type="PANTHER" id="PTHR32338:SF10">
    <property type="entry name" value="N-ACETYL-GAMMA-GLUTAMYL-PHOSPHATE REDUCTASE, CHLOROPLASTIC-RELATED"/>
    <property type="match status" value="1"/>
</dbReference>
<dbReference type="PANTHER" id="PTHR32338">
    <property type="entry name" value="N-ACETYL-GAMMA-GLUTAMYL-PHOSPHATE REDUCTASE, CHLOROPLASTIC-RELATED-RELATED"/>
    <property type="match status" value="1"/>
</dbReference>
<dbReference type="Pfam" id="PF01118">
    <property type="entry name" value="Semialdhyde_dh"/>
    <property type="match status" value="1"/>
</dbReference>
<dbReference type="Pfam" id="PF22698">
    <property type="entry name" value="Semialdhyde_dhC_1"/>
    <property type="match status" value="1"/>
</dbReference>
<dbReference type="SMART" id="SM00859">
    <property type="entry name" value="Semialdhyde_dh"/>
    <property type="match status" value="1"/>
</dbReference>
<dbReference type="SUPFAM" id="SSF55347">
    <property type="entry name" value="Glyceraldehyde-3-phosphate dehydrogenase-like, C-terminal domain"/>
    <property type="match status" value="1"/>
</dbReference>
<dbReference type="SUPFAM" id="SSF51735">
    <property type="entry name" value="NAD(P)-binding Rossmann-fold domains"/>
    <property type="match status" value="1"/>
</dbReference>
<dbReference type="PROSITE" id="PS01224">
    <property type="entry name" value="ARGC"/>
    <property type="match status" value="1"/>
</dbReference>
<reference key="1">
    <citation type="submission" date="2009-01" db="EMBL/GenBank/DDBJ databases">
        <title>Complete sequence of chromosome of Arthrobacter chlorophenolicus A6.</title>
        <authorList>
            <consortium name="US DOE Joint Genome Institute"/>
            <person name="Lucas S."/>
            <person name="Copeland A."/>
            <person name="Lapidus A."/>
            <person name="Glavina del Rio T."/>
            <person name="Tice H."/>
            <person name="Bruce D."/>
            <person name="Goodwin L."/>
            <person name="Pitluck S."/>
            <person name="Goltsman E."/>
            <person name="Clum A."/>
            <person name="Larimer F."/>
            <person name="Land M."/>
            <person name="Hauser L."/>
            <person name="Kyrpides N."/>
            <person name="Mikhailova N."/>
            <person name="Jansson J."/>
            <person name="Richardson P."/>
        </authorList>
    </citation>
    <scope>NUCLEOTIDE SEQUENCE [LARGE SCALE GENOMIC DNA]</scope>
    <source>
        <strain>ATCC 700700 / DSM 12829 / CIP 107037 / JCM 12360 / KCTC 9906 / NCIMB 13794 / A6</strain>
    </source>
</reference>
<comment type="function">
    <text evidence="1">Catalyzes the NADPH-dependent reduction of N-acetyl-5-glutamyl phosphate to yield N-acetyl-L-glutamate 5-semialdehyde.</text>
</comment>
<comment type="catalytic activity">
    <reaction evidence="1">
        <text>N-acetyl-L-glutamate 5-semialdehyde + phosphate + NADP(+) = N-acetyl-L-glutamyl 5-phosphate + NADPH + H(+)</text>
        <dbReference type="Rhea" id="RHEA:21588"/>
        <dbReference type="ChEBI" id="CHEBI:15378"/>
        <dbReference type="ChEBI" id="CHEBI:29123"/>
        <dbReference type="ChEBI" id="CHEBI:43474"/>
        <dbReference type="ChEBI" id="CHEBI:57783"/>
        <dbReference type="ChEBI" id="CHEBI:57936"/>
        <dbReference type="ChEBI" id="CHEBI:58349"/>
        <dbReference type="EC" id="1.2.1.38"/>
    </reaction>
</comment>
<comment type="pathway">
    <text evidence="1">Amino-acid biosynthesis; L-arginine biosynthesis; N(2)-acetyl-L-ornithine from L-glutamate: step 3/4.</text>
</comment>
<comment type="subcellular location">
    <subcellularLocation>
        <location evidence="1">Cytoplasm</location>
    </subcellularLocation>
</comment>
<comment type="similarity">
    <text evidence="1">Belongs to the NAGSA dehydrogenase family. Type 1 subfamily.</text>
</comment>
<protein>
    <recommendedName>
        <fullName evidence="1">N-acetyl-gamma-glutamyl-phosphate reductase</fullName>
        <shortName evidence="1">AGPR</shortName>
        <ecNumber evidence="1">1.2.1.38</ecNumber>
    </recommendedName>
    <alternativeName>
        <fullName evidence="1">N-acetyl-glutamate semialdehyde dehydrogenase</fullName>
        <shortName evidence="1">NAGSA dehydrogenase</shortName>
    </alternativeName>
</protein>
<gene>
    <name evidence="1" type="primary">argC</name>
    <name type="ordered locus">Achl_1497</name>
</gene>
<evidence type="ECO:0000255" key="1">
    <source>
        <dbReference type="HAMAP-Rule" id="MF_00150"/>
    </source>
</evidence>
<proteinExistence type="inferred from homology"/>
<accession>B8HGC3</accession>
<sequence>MTISVAVSGASGYAGGEVLRILAGHPDVTIGAITAHSNAGSRLGELQPHLHGLASRILEDTTVENLSGHDVVFLALPHGASAEIAAQLPEGTVVIDAGADHRLEDPAAWEKFYGSAHAGTWPYGLPELPGQREALKGATRIAVPGCYPTSALLALTPGFAANLLEPDDVVIVSASGTSGAGKAAKVNLIGAEVMGSMSPYGVGGGHRHTPEIEQGLSNAAGERVTVSFTPTLAPMSRGILTTATAKVKAGTTAEQLRQAWADAYDDEPFVHLLPEGQWPGTKSVQGSNHAAMQLAFDPHTGRVVVTCVIDNLTKGTAGGAVQSMNIALGLPETAGLNLQGVAP</sequence>
<name>ARGC_PSECP</name>
<feature type="chain" id="PRO_1000123228" description="N-acetyl-gamma-glutamyl-phosphate reductase">
    <location>
        <begin position="1"/>
        <end position="343"/>
    </location>
</feature>
<feature type="active site" evidence="1">
    <location>
        <position position="146"/>
    </location>
</feature>
<organism>
    <name type="scientific">Pseudarthrobacter chlorophenolicus (strain ATCC 700700 / DSM 12829 / CIP 107037 / JCM 12360 / KCTC 9906 / NCIMB 13794 / A6)</name>
    <name type="common">Arthrobacter chlorophenolicus</name>
    <dbReference type="NCBI Taxonomy" id="452863"/>
    <lineage>
        <taxon>Bacteria</taxon>
        <taxon>Bacillati</taxon>
        <taxon>Actinomycetota</taxon>
        <taxon>Actinomycetes</taxon>
        <taxon>Micrococcales</taxon>
        <taxon>Micrococcaceae</taxon>
        <taxon>Pseudarthrobacter</taxon>
    </lineage>
</organism>